<dbReference type="EMBL" id="MW574478">
    <property type="protein sequence ID" value="QTZ21212.1"/>
    <property type="molecule type" value="Genomic_DNA"/>
</dbReference>
<dbReference type="EMBL" id="MW574479">
    <property type="protein sequence ID" value="QTZ21213.1"/>
    <property type="molecule type" value="mRNA"/>
</dbReference>
<name>TILM_BOMIG</name>
<comment type="function">
    <text evidence="3">Inhibits metalloprotease (human MMP3), trypsin, chymotrypsin, plasmin and microbial serine protease (proteinase K). Exhibits antifibrinolytic activity by binding plasmin and inhibiting it. Does not inhibit elastase, thrombin or microbial serine protease (subtilisin A).</text>
</comment>
<comment type="subcellular location">
    <subcellularLocation>
        <location evidence="3">Secreted</location>
    </subcellularLocation>
</comment>
<comment type="tissue specificity">
    <text evidence="6">Expressed by the venom gland.</text>
</comment>
<comment type="similarity">
    <text evidence="5">Belongs to the serine protease inhibitor-like (TIL domain-containing) family.</text>
</comment>
<sequence>MFRFVCVLFIALVVFCTTTSAGELVCNRPNEEYRCGSACQTTCATLGQRCPIMNIRCNDACYCKEGYARYGDDTGMCVSISQCNSKRSAIAQILRSKQLSKNSGV</sequence>
<keyword id="KW-1015">Disulfide bond</keyword>
<keyword id="KW-1199">Hemostasis impairing toxin</keyword>
<keyword id="KW-0481">Metalloenzyme inhibitor</keyword>
<keyword id="KW-0483">Metalloprotease inhibitor</keyword>
<keyword id="KW-0646">Protease inhibitor</keyword>
<keyword id="KW-0964">Secreted</keyword>
<keyword id="KW-0722">Serine protease inhibitor</keyword>
<keyword id="KW-0732">Signal</keyword>
<keyword id="KW-0800">Toxin</keyword>
<organism>
    <name type="scientific">Bombus ignitus</name>
    <name type="common">Bumblebee</name>
    <dbReference type="NCBI Taxonomy" id="130704"/>
    <lineage>
        <taxon>Eukaryota</taxon>
        <taxon>Metazoa</taxon>
        <taxon>Ecdysozoa</taxon>
        <taxon>Arthropoda</taxon>
        <taxon>Hexapoda</taxon>
        <taxon>Insecta</taxon>
        <taxon>Pterygota</taxon>
        <taxon>Neoptera</taxon>
        <taxon>Endopterygota</taxon>
        <taxon>Hymenoptera</taxon>
        <taxon>Apocrita</taxon>
        <taxon>Aculeata</taxon>
        <taxon>Apoidea</taxon>
        <taxon>Anthophila</taxon>
        <taxon>Apidae</taxon>
        <taxon>Bombus</taxon>
        <taxon>Bombus</taxon>
    </lineage>
</organism>
<reference key="1">
    <citation type="journal article" date="2021" name="Comp. Biochem. Physiol.">
        <title>Anti-fibrinolytic activity of a metalloprotease inhibitor from bumblebee (Bombus ignitus) venom.</title>
        <authorList>
            <person name="Kim B.Y."/>
            <person name="Lee K.S."/>
            <person name="Lee K.Y."/>
            <person name="Yoon H.J."/>
            <person name="Jin B.R."/>
        </authorList>
    </citation>
    <scope>NUCLEOTIDE SEQUENCE [GENOMIC DNA / MRNA]</scope>
    <scope>FUNCTION</scope>
    <scope>RECOMBINANT EXPRESSION</scope>
    <scope>SUBCELLULAR LOCATION</scope>
    <source>
        <tissue>Venom</tissue>
        <tissue>Venom gland</tissue>
    </source>
</reference>
<protein>
    <recommendedName>
        <fullName evidence="4">Venom metalloprotease inhibitor</fullName>
        <shortName evidence="4">BiVMPI</shortName>
    </recommendedName>
</protein>
<accession>P0DRJ0</accession>
<evidence type="ECO:0000250" key="1">
    <source>
        <dbReference type="UniProtKB" id="P07851"/>
    </source>
</evidence>
<evidence type="ECO:0000255" key="2"/>
<evidence type="ECO:0000269" key="3">
    <source>
    </source>
</evidence>
<evidence type="ECO:0000303" key="4">
    <source>
    </source>
</evidence>
<evidence type="ECO:0000305" key="5"/>
<evidence type="ECO:0000305" key="6">
    <source>
    </source>
</evidence>
<proteinExistence type="inferred from homology"/>
<feature type="signal peptide" evidence="2">
    <location>
        <begin position="1"/>
        <end position="21"/>
    </location>
</feature>
<feature type="chain" id="PRO_0000462304" description="Venom metalloprotease inhibitor" evidence="6">
    <location>
        <begin position="22"/>
        <end position="105"/>
    </location>
</feature>
<feature type="domain" description="TIL" evidence="5">
    <location>
        <begin position="26"/>
        <end position="83"/>
    </location>
</feature>
<feature type="disulfide bond" evidence="1">
    <location>
        <begin position="26"/>
        <end position="61"/>
    </location>
</feature>
<feature type="disulfide bond" evidence="5">
    <location>
        <begin position="35"/>
        <end position="57"/>
    </location>
</feature>
<feature type="disulfide bond" evidence="1">
    <location>
        <begin position="39"/>
        <end position="50"/>
    </location>
</feature>
<feature type="disulfide bond" evidence="1">
    <location>
        <begin position="43"/>
        <end position="83"/>
    </location>
</feature>
<feature type="disulfide bond" evidence="1">
    <location>
        <begin position="63"/>
        <end position="77"/>
    </location>
</feature>